<dbReference type="EMBL" id="CP000462">
    <property type="protein sequence ID" value="ABK37119.1"/>
    <property type="molecule type" value="Genomic_DNA"/>
</dbReference>
<dbReference type="RefSeq" id="WP_005340616.1">
    <property type="nucleotide sequence ID" value="NC_008570.1"/>
</dbReference>
<dbReference type="RefSeq" id="YP_854840.1">
    <property type="nucleotide sequence ID" value="NC_008570.1"/>
</dbReference>
<dbReference type="SMR" id="A0KF22"/>
<dbReference type="STRING" id="380703.AHA_0310"/>
<dbReference type="EnsemblBacteria" id="ABK37119">
    <property type="protein sequence ID" value="ABK37119"/>
    <property type="gene ID" value="AHA_0310"/>
</dbReference>
<dbReference type="GeneID" id="97858395"/>
<dbReference type="KEGG" id="aha:AHA_0310"/>
<dbReference type="PATRIC" id="fig|380703.7.peg.299"/>
<dbReference type="eggNOG" id="COG0088">
    <property type="taxonomic scope" value="Bacteria"/>
</dbReference>
<dbReference type="HOGENOM" id="CLU_041575_5_2_6"/>
<dbReference type="OrthoDB" id="9803201at2"/>
<dbReference type="PRO" id="PR:A0KF22"/>
<dbReference type="Proteomes" id="UP000000756">
    <property type="component" value="Chromosome"/>
</dbReference>
<dbReference type="GO" id="GO:1990904">
    <property type="term" value="C:ribonucleoprotein complex"/>
    <property type="evidence" value="ECO:0007669"/>
    <property type="project" value="UniProtKB-KW"/>
</dbReference>
<dbReference type="GO" id="GO:0005840">
    <property type="term" value="C:ribosome"/>
    <property type="evidence" value="ECO:0007669"/>
    <property type="project" value="UniProtKB-KW"/>
</dbReference>
<dbReference type="GO" id="GO:0019843">
    <property type="term" value="F:rRNA binding"/>
    <property type="evidence" value="ECO:0007669"/>
    <property type="project" value="UniProtKB-UniRule"/>
</dbReference>
<dbReference type="GO" id="GO:0003735">
    <property type="term" value="F:structural constituent of ribosome"/>
    <property type="evidence" value="ECO:0007669"/>
    <property type="project" value="InterPro"/>
</dbReference>
<dbReference type="GO" id="GO:0006412">
    <property type="term" value="P:translation"/>
    <property type="evidence" value="ECO:0007669"/>
    <property type="project" value="UniProtKB-UniRule"/>
</dbReference>
<dbReference type="FunFam" id="3.40.1370.10:FF:000001">
    <property type="entry name" value="50S ribosomal protein L4"/>
    <property type="match status" value="1"/>
</dbReference>
<dbReference type="Gene3D" id="3.40.1370.10">
    <property type="match status" value="1"/>
</dbReference>
<dbReference type="HAMAP" id="MF_01328_B">
    <property type="entry name" value="Ribosomal_uL4_B"/>
    <property type="match status" value="1"/>
</dbReference>
<dbReference type="InterPro" id="IPR002136">
    <property type="entry name" value="Ribosomal_uL4"/>
</dbReference>
<dbReference type="InterPro" id="IPR013005">
    <property type="entry name" value="Ribosomal_uL4-like"/>
</dbReference>
<dbReference type="InterPro" id="IPR023574">
    <property type="entry name" value="Ribosomal_uL4_dom_sf"/>
</dbReference>
<dbReference type="NCBIfam" id="TIGR03953">
    <property type="entry name" value="rplD_bact"/>
    <property type="match status" value="1"/>
</dbReference>
<dbReference type="PANTHER" id="PTHR10746">
    <property type="entry name" value="50S RIBOSOMAL PROTEIN L4"/>
    <property type="match status" value="1"/>
</dbReference>
<dbReference type="PANTHER" id="PTHR10746:SF6">
    <property type="entry name" value="LARGE RIBOSOMAL SUBUNIT PROTEIN UL4M"/>
    <property type="match status" value="1"/>
</dbReference>
<dbReference type="Pfam" id="PF00573">
    <property type="entry name" value="Ribosomal_L4"/>
    <property type="match status" value="1"/>
</dbReference>
<dbReference type="SUPFAM" id="SSF52166">
    <property type="entry name" value="Ribosomal protein L4"/>
    <property type="match status" value="1"/>
</dbReference>
<proteinExistence type="inferred from homology"/>
<sequence length="201" mass="22197">MELVMKDAKSALEVSETTFGREFNEALVHQVVVAYAAGARQGTRAQLTRSEVSGGGKKPWRQKGTGRARAGSIRSPIWRSGGVTFAAKPQDHSQKVNKKMYRGAIRSILSELVRQERLIVVEKFGIEAPKTKELIAKLKEMELTDVLIVTAEVDENLFLAARNLYKVDVRDVAGIDPVSLIAFDKVLMTADAVKQIEEMLA</sequence>
<accession>A0KF22</accession>
<reference key="1">
    <citation type="journal article" date="2006" name="J. Bacteriol.">
        <title>Genome sequence of Aeromonas hydrophila ATCC 7966T: jack of all trades.</title>
        <authorList>
            <person name="Seshadri R."/>
            <person name="Joseph S.W."/>
            <person name="Chopra A.K."/>
            <person name="Sha J."/>
            <person name="Shaw J."/>
            <person name="Graf J."/>
            <person name="Haft D.H."/>
            <person name="Wu M."/>
            <person name="Ren Q."/>
            <person name="Rosovitz M.J."/>
            <person name="Madupu R."/>
            <person name="Tallon L."/>
            <person name="Kim M."/>
            <person name="Jin S."/>
            <person name="Vuong H."/>
            <person name="Stine O.C."/>
            <person name="Ali A."/>
            <person name="Horneman A.J."/>
            <person name="Heidelberg J.F."/>
        </authorList>
    </citation>
    <scope>NUCLEOTIDE SEQUENCE [LARGE SCALE GENOMIC DNA]</scope>
    <source>
        <strain>ATCC 7966 / DSM 30187 / BCRC 13018 / CCUG 14551 / JCM 1027 / KCTC 2358 / NCIMB 9240 / NCTC 8049</strain>
    </source>
</reference>
<evidence type="ECO:0000255" key="1">
    <source>
        <dbReference type="HAMAP-Rule" id="MF_01328"/>
    </source>
</evidence>
<evidence type="ECO:0000256" key="2">
    <source>
        <dbReference type="SAM" id="MobiDB-lite"/>
    </source>
</evidence>
<evidence type="ECO:0000305" key="3"/>
<name>RL4_AERHH</name>
<feature type="chain" id="PRO_1000052349" description="Large ribosomal subunit protein uL4">
    <location>
        <begin position="1"/>
        <end position="201"/>
    </location>
</feature>
<feature type="region of interest" description="Disordered" evidence="2">
    <location>
        <begin position="45"/>
        <end position="66"/>
    </location>
</feature>
<comment type="function">
    <text evidence="1">One of the primary rRNA binding proteins, this protein initially binds near the 5'-end of the 23S rRNA. It is important during the early stages of 50S assembly. It makes multiple contacts with different domains of the 23S rRNA in the assembled 50S subunit and ribosome.</text>
</comment>
<comment type="function">
    <text evidence="1">Forms part of the polypeptide exit tunnel.</text>
</comment>
<comment type="subunit">
    <text evidence="1">Part of the 50S ribosomal subunit.</text>
</comment>
<comment type="similarity">
    <text evidence="1">Belongs to the universal ribosomal protein uL4 family.</text>
</comment>
<organism>
    <name type="scientific">Aeromonas hydrophila subsp. hydrophila (strain ATCC 7966 / DSM 30187 / BCRC 13018 / CCUG 14551 / JCM 1027 / KCTC 2358 / NCIMB 9240 / NCTC 8049)</name>
    <dbReference type="NCBI Taxonomy" id="380703"/>
    <lineage>
        <taxon>Bacteria</taxon>
        <taxon>Pseudomonadati</taxon>
        <taxon>Pseudomonadota</taxon>
        <taxon>Gammaproteobacteria</taxon>
        <taxon>Aeromonadales</taxon>
        <taxon>Aeromonadaceae</taxon>
        <taxon>Aeromonas</taxon>
    </lineage>
</organism>
<protein>
    <recommendedName>
        <fullName evidence="1">Large ribosomal subunit protein uL4</fullName>
    </recommendedName>
    <alternativeName>
        <fullName evidence="3">50S ribosomal protein L4</fullName>
    </alternativeName>
</protein>
<keyword id="KW-1185">Reference proteome</keyword>
<keyword id="KW-0687">Ribonucleoprotein</keyword>
<keyword id="KW-0689">Ribosomal protein</keyword>
<keyword id="KW-0694">RNA-binding</keyword>
<keyword id="KW-0699">rRNA-binding</keyword>
<gene>
    <name evidence="1" type="primary">rplD</name>
    <name type="ordered locus">AHA_0310</name>
</gene>